<sequence length="239" mass="27999">MEVDSKKSSDVVTKLPQKRFYRQRAHSNPIADHSFQYPAHPDEYEWSQHYPDIGDRRVAFADIGCGYGGFLVTLGEIYPDKFAVGMEIRVKVSDYVMDRIDALRKLHEGQYRNVACIRTNAMKYLTNFFHKAQLEKMFFLYPDPHFKKAKHKWRIINSALLSEYSYVLRKGGLIYTVTDVRDLHEWMCKHIEQHPAFERLSEAEVEADILSEKLLDSSEEGKKVTRNKGDKFVAIFRRV</sequence>
<feature type="chain" id="PRO_0000370567" description="tRNA (guanine-N(7)-)-methyltransferase">
    <location>
        <begin position="1"/>
        <end position="239"/>
    </location>
</feature>
<feature type="active site" evidence="1">
    <location>
        <position position="143"/>
    </location>
</feature>
<feature type="binding site" evidence="1">
    <location>
        <position position="64"/>
    </location>
    <ligand>
        <name>S-adenosyl-L-methionine</name>
        <dbReference type="ChEBI" id="CHEBI:59789"/>
    </ligand>
</feature>
<feature type="binding site" evidence="1">
    <location>
        <begin position="87"/>
        <end position="88"/>
    </location>
    <ligand>
        <name>S-adenosyl-L-methionine</name>
        <dbReference type="ChEBI" id="CHEBI:59789"/>
    </ligand>
</feature>
<feature type="binding site" evidence="1">
    <location>
        <begin position="120"/>
        <end position="121"/>
    </location>
    <ligand>
        <name>S-adenosyl-L-methionine</name>
        <dbReference type="ChEBI" id="CHEBI:59789"/>
    </ligand>
</feature>
<feature type="binding site" evidence="1">
    <location>
        <position position="140"/>
    </location>
    <ligand>
        <name>S-adenosyl-L-methionine</name>
        <dbReference type="ChEBI" id="CHEBI:59789"/>
    </ligand>
</feature>
<feature type="binding site" evidence="1">
    <location>
        <begin position="218"/>
        <end position="220"/>
    </location>
    <ligand>
        <name>S-adenosyl-L-methionine</name>
        <dbReference type="ChEBI" id="CHEBI:59789"/>
    </ligand>
</feature>
<organism>
    <name type="scientific">Culex quinquefasciatus</name>
    <name type="common">Southern house mosquito</name>
    <name type="synonym">Culex pungens</name>
    <dbReference type="NCBI Taxonomy" id="7176"/>
    <lineage>
        <taxon>Eukaryota</taxon>
        <taxon>Metazoa</taxon>
        <taxon>Ecdysozoa</taxon>
        <taxon>Arthropoda</taxon>
        <taxon>Hexapoda</taxon>
        <taxon>Insecta</taxon>
        <taxon>Pterygota</taxon>
        <taxon>Neoptera</taxon>
        <taxon>Endopterygota</taxon>
        <taxon>Diptera</taxon>
        <taxon>Nematocera</taxon>
        <taxon>Culicoidea</taxon>
        <taxon>Culicidae</taxon>
        <taxon>Culicinae</taxon>
        <taxon>Culicini</taxon>
        <taxon>Culex</taxon>
        <taxon>Culex</taxon>
    </lineage>
</organism>
<evidence type="ECO:0000255" key="1">
    <source>
        <dbReference type="HAMAP-Rule" id="MF_03055"/>
    </source>
</evidence>
<dbReference type="EC" id="2.1.1.33" evidence="1"/>
<dbReference type="EMBL" id="DS232068">
    <property type="protein sequence ID" value="EDS33756.1"/>
    <property type="molecule type" value="Genomic_DNA"/>
</dbReference>
<dbReference type="RefSeq" id="XP_001851677.1">
    <property type="nucleotide sequence ID" value="XM_001851626.1"/>
</dbReference>
<dbReference type="SMR" id="B0WSB8"/>
<dbReference type="FunCoup" id="B0WSB8">
    <property type="interactions" value="1014"/>
</dbReference>
<dbReference type="STRING" id="7176.B0WSB8"/>
<dbReference type="EnsemblMetazoa" id="CPIJ009694-RA">
    <property type="protein sequence ID" value="CPIJ009694-PA"/>
    <property type="gene ID" value="CPIJ009694"/>
</dbReference>
<dbReference type="EnsemblMetazoa" id="CQUJHB003217.R4959">
    <property type="protein sequence ID" value="CQUJHB003217.P4959"/>
    <property type="gene ID" value="CQUJHB003217"/>
</dbReference>
<dbReference type="EnsemblMetazoa" id="XM_038249551.1">
    <property type="protein sequence ID" value="XP_038105479.1"/>
    <property type="gene ID" value="LOC6042495"/>
</dbReference>
<dbReference type="KEGG" id="cqu:CpipJ_CPIJ009694"/>
<dbReference type="VEuPathDB" id="VectorBase:CPIJ009694"/>
<dbReference type="VEuPathDB" id="VectorBase:CQUJHB003217"/>
<dbReference type="eggNOG" id="KOG3115">
    <property type="taxonomic scope" value="Eukaryota"/>
</dbReference>
<dbReference type="HOGENOM" id="CLU_050910_3_0_1"/>
<dbReference type="InParanoid" id="B0WSB8"/>
<dbReference type="OMA" id="LPNYFAK"/>
<dbReference type="OrthoDB" id="47276at2759"/>
<dbReference type="PhylomeDB" id="B0WSB8"/>
<dbReference type="UniPathway" id="UPA00989"/>
<dbReference type="Proteomes" id="UP000002320">
    <property type="component" value="Unassembled WGS sequence"/>
</dbReference>
<dbReference type="GO" id="GO:0005634">
    <property type="term" value="C:nucleus"/>
    <property type="evidence" value="ECO:0007669"/>
    <property type="project" value="UniProtKB-SubCell"/>
</dbReference>
<dbReference type="GO" id="GO:0043527">
    <property type="term" value="C:tRNA methyltransferase complex"/>
    <property type="evidence" value="ECO:0007669"/>
    <property type="project" value="TreeGrafter"/>
</dbReference>
<dbReference type="GO" id="GO:0008176">
    <property type="term" value="F:tRNA (guanine(46)-N7)-methyltransferase activity"/>
    <property type="evidence" value="ECO:0007669"/>
    <property type="project" value="UniProtKB-UniRule"/>
</dbReference>
<dbReference type="GO" id="GO:0000049">
    <property type="term" value="F:tRNA binding"/>
    <property type="evidence" value="ECO:0007669"/>
    <property type="project" value="UniProtKB-UniRule"/>
</dbReference>
<dbReference type="FunFam" id="3.40.50.150:FF:000060">
    <property type="entry name" value="tRNA (guanine-N(7)-)-methyltransferase"/>
    <property type="match status" value="1"/>
</dbReference>
<dbReference type="Gene3D" id="3.40.50.150">
    <property type="entry name" value="Vaccinia Virus protein VP39"/>
    <property type="match status" value="1"/>
</dbReference>
<dbReference type="HAMAP" id="MF_03055">
    <property type="entry name" value="tRNA_methyltr_TrmB_euk"/>
    <property type="match status" value="1"/>
</dbReference>
<dbReference type="InterPro" id="IPR029063">
    <property type="entry name" value="SAM-dependent_MTases_sf"/>
</dbReference>
<dbReference type="InterPro" id="IPR025763">
    <property type="entry name" value="Trm8_euk"/>
</dbReference>
<dbReference type="InterPro" id="IPR003358">
    <property type="entry name" value="tRNA_(Gua-N-7)_MeTrfase_Trmb"/>
</dbReference>
<dbReference type="NCBIfam" id="TIGR00091">
    <property type="entry name" value="tRNA (guanosine(46)-N7)-methyltransferase TrmB"/>
    <property type="match status" value="1"/>
</dbReference>
<dbReference type="PANTHER" id="PTHR23417">
    <property type="entry name" value="3-DEOXY-D-MANNO-OCTULOSONIC-ACID TRANSFERASE/TRNA GUANINE-N 7 - -METHYLTRANSFERASE"/>
    <property type="match status" value="1"/>
</dbReference>
<dbReference type="PANTHER" id="PTHR23417:SF16">
    <property type="entry name" value="TRNA (GUANINE-N(7)-)-METHYLTRANSFERASE"/>
    <property type="match status" value="1"/>
</dbReference>
<dbReference type="Pfam" id="PF02390">
    <property type="entry name" value="Methyltransf_4"/>
    <property type="match status" value="1"/>
</dbReference>
<dbReference type="SUPFAM" id="SSF53335">
    <property type="entry name" value="S-adenosyl-L-methionine-dependent methyltransferases"/>
    <property type="match status" value="1"/>
</dbReference>
<dbReference type="PROSITE" id="PS51625">
    <property type="entry name" value="SAM_MT_TRMB"/>
    <property type="match status" value="1"/>
</dbReference>
<name>TRMB_CULQU</name>
<accession>B0WSB8</accession>
<gene>
    <name type="ORF">CPIJ009694</name>
</gene>
<protein>
    <recommendedName>
        <fullName evidence="1">tRNA (guanine-N(7)-)-methyltransferase</fullName>
        <ecNumber evidence="1">2.1.1.33</ecNumber>
    </recommendedName>
    <alternativeName>
        <fullName evidence="1">tRNA (guanine(46)-N(7))-methyltransferase</fullName>
    </alternativeName>
    <alternativeName>
        <fullName evidence="1">tRNA(m7G46)-methyltransferase</fullName>
    </alternativeName>
</protein>
<comment type="function">
    <text evidence="1">Catalyzes the formation of N(7)-methylguanine at position 46 (m7G46) in tRNA.</text>
</comment>
<comment type="catalytic activity">
    <reaction evidence="1">
        <text>guanosine(46) in tRNA + S-adenosyl-L-methionine = N(7)-methylguanosine(46) in tRNA + S-adenosyl-L-homocysteine</text>
        <dbReference type="Rhea" id="RHEA:42708"/>
        <dbReference type="Rhea" id="RHEA-COMP:10188"/>
        <dbReference type="Rhea" id="RHEA-COMP:10189"/>
        <dbReference type="ChEBI" id="CHEBI:57856"/>
        <dbReference type="ChEBI" id="CHEBI:59789"/>
        <dbReference type="ChEBI" id="CHEBI:74269"/>
        <dbReference type="ChEBI" id="CHEBI:74480"/>
        <dbReference type="EC" id="2.1.1.33"/>
    </reaction>
</comment>
<comment type="pathway">
    <text evidence="1">tRNA modification; N(7)-methylguanine-tRNA biosynthesis.</text>
</comment>
<comment type="subcellular location">
    <subcellularLocation>
        <location evidence="1">Nucleus</location>
    </subcellularLocation>
</comment>
<comment type="similarity">
    <text evidence="1">Belongs to the class I-like SAM-binding methyltransferase superfamily. TrmB family.</text>
</comment>
<reference key="1">
    <citation type="submission" date="2007-03" db="EMBL/GenBank/DDBJ databases">
        <title>Annotation of Culex pipiens quinquefasciatus.</title>
        <authorList>
            <consortium name="The Broad Institute Genome Sequencing Platform"/>
            <person name="Atkinson P.W."/>
            <person name="Hemingway J."/>
            <person name="Christensen B.M."/>
            <person name="Higgs S."/>
            <person name="Kodira C.D."/>
            <person name="Hannick L.I."/>
            <person name="Megy K."/>
            <person name="O'Leary S.B."/>
            <person name="Pearson M."/>
            <person name="Haas B.J."/>
            <person name="Mauceli E."/>
            <person name="Wortman J.R."/>
            <person name="Lee N.H."/>
            <person name="Guigo R."/>
            <person name="Stanke M."/>
            <person name="Alvarado L."/>
            <person name="Amedeo P."/>
            <person name="Antoine C.H."/>
            <person name="Arensburger P."/>
            <person name="Bidwell S.L."/>
            <person name="Crawford M."/>
            <person name="Camaro F."/>
            <person name="Devon K."/>
            <person name="Engels R."/>
            <person name="Hammond M."/>
            <person name="Howarth C."/>
            <person name="Koehrsen M."/>
            <person name="Lawson D."/>
            <person name="Montgomery P."/>
            <person name="Nene V."/>
            <person name="Nusbaum C."/>
            <person name="Puiu D."/>
            <person name="Romero-Severson J."/>
            <person name="Severson D.W."/>
            <person name="Shumway M."/>
            <person name="Sisk P."/>
            <person name="Stolte C."/>
            <person name="Zeng Q."/>
            <person name="Eisenstadt E."/>
            <person name="Fraser-Liggett C.M."/>
            <person name="Strausberg R."/>
            <person name="Galagan J."/>
            <person name="Birren B."/>
            <person name="Collins F.H."/>
        </authorList>
    </citation>
    <scope>NUCLEOTIDE SEQUENCE [LARGE SCALE GENOMIC DNA]</scope>
    <source>
        <strain>JHB</strain>
    </source>
</reference>
<keyword id="KW-0489">Methyltransferase</keyword>
<keyword id="KW-0539">Nucleus</keyword>
<keyword id="KW-1185">Reference proteome</keyword>
<keyword id="KW-0694">RNA-binding</keyword>
<keyword id="KW-0949">S-adenosyl-L-methionine</keyword>
<keyword id="KW-0808">Transferase</keyword>
<keyword id="KW-0819">tRNA processing</keyword>
<keyword id="KW-0820">tRNA-binding</keyword>
<proteinExistence type="inferred from homology"/>